<reference key="1">
    <citation type="journal article" date="1985" name="EMBO J.">
        <title>Genes 55, alpha gt, 47 and 46 of bacteriophage T4: the genomic organization as deduced by sequence analysis.</title>
        <authorList>
            <person name="Gram H."/>
            <person name="Rueger W."/>
        </authorList>
    </citation>
    <scope>NUCLEOTIDE SEQUENCE [GENOMIC DNA]</scope>
</reference>
<reference key="2">
    <citation type="journal article" date="2003" name="Microbiol. Mol. Biol. Rev.">
        <title>Bacteriophage T4 genome.</title>
        <authorList>
            <person name="Miller E.S."/>
            <person name="Kutter E."/>
            <person name="Mosig G."/>
            <person name="Arisaka F."/>
            <person name="Kunisawa T."/>
            <person name="Ruger W."/>
        </authorList>
    </citation>
    <scope>NUCLEOTIDE SEQUENCE [LARGE SCALE GENOMIC DNA]</scope>
</reference>
<accession>P13328</accession>
<feature type="chain" id="PRO_0000165100" description="Uncharacterized 7.3 kDa protein in mobB-Gp55 intergenic region">
    <location>
        <begin position="1"/>
        <end position="63"/>
    </location>
</feature>
<gene>
    <name type="primary">y03F</name>
    <name type="synonym">agt.2</name>
</gene>
<protein>
    <recommendedName>
        <fullName>Uncharacterized 7.3 kDa protein in mobB-Gp55 intergenic region</fullName>
    </recommendedName>
    <alternativeName>
        <fullName>ORF C</fullName>
    </alternativeName>
</protein>
<name>Y03F_BPT4</name>
<organism>
    <name type="scientific">Enterobacteria phage T4</name>
    <name type="common">Bacteriophage T4</name>
    <dbReference type="NCBI Taxonomy" id="10665"/>
    <lineage>
        <taxon>Viruses</taxon>
        <taxon>Duplodnaviria</taxon>
        <taxon>Heunggongvirae</taxon>
        <taxon>Uroviricota</taxon>
        <taxon>Caudoviricetes</taxon>
        <taxon>Straboviridae</taxon>
        <taxon>Tevenvirinae</taxon>
        <taxon>Tequatrovirus</taxon>
    </lineage>
</organism>
<sequence>MVATVKDEHPTSEIDYNKIRSSREEMMRRFKEAHDKAKAEGTITYKRIKFKSSNEPLYGVLCG</sequence>
<proteinExistence type="predicted"/>
<dbReference type="EMBL" id="X01804">
    <property type="protein sequence ID" value="CAA25937.1"/>
    <property type="status" value="ALT_SEQ"/>
    <property type="molecule type" value="Genomic_DNA"/>
</dbReference>
<dbReference type="EMBL" id="AF158101">
    <property type="protein sequence ID" value="AAD42528.1"/>
    <property type="molecule type" value="Genomic_DNA"/>
</dbReference>
<dbReference type="PIR" id="T10154">
    <property type="entry name" value="T10154"/>
</dbReference>
<dbReference type="KEGG" id="vg:1258820"/>
<dbReference type="OrthoDB" id="25852at10239"/>
<dbReference type="Proteomes" id="UP000009087">
    <property type="component" value="Segment"/>
</dbReference>
<dbReference type="InterPro" id="IPR035136">
    <property type="entry name" value="DUF5486"/>
</dbReference>
<dbReference type="Pfam" id="PF17588">
    <property type="entry name" value="DUF5486"/>
    <property type="match status" value="1"/>
</dbReference>
<keyword id="KW-1185">Reference proteome</keyword>
<organismHost>
    <name type="scientific">Escherichia coli</name>
    <dbReference type="NCBI Taxonomy" id="562"/>
</organismHost>